<evidence type="ECO:0000250" key="1"/>
<evidence type="ECO:0000255" key="2">
    <source>
        <dbReference type="HAMAP-Rule" id="MF_00118"/>
    </source>
</evidence>
<protein>
    <recommendedName>
        <fullName evidence="2">Elongation factor Tu</fullName>
        <shortName evidence="2">EF-Tu</shortName>
        <ecNumber evidence="2">3.6.5.3</ecNumber>
    </recommendedName>
</protein>
<dbReference type="EC" id="3.6.5.3" evidence="2"/>
<dbReference type="EMBL" id="AE005672">
    <property type="protein sequence ID" value="AAK75581.1"/>
    <property type="molecule type" value="Genomic_DNA"/>
</dbReference>
<dbReference type="PIR" id="D95173">
    <property type="entry name" value="D95173"/>
</dbReference>
<dbReference type="RefSeq" id="WP_001040724.1">
    <property type="nucleotide sequence ID" value="NZ_CP155539.1"/>
</dbReference>
<dbReference type="SMR" id="P64030"/>
<dbReference type="PaxDb" id="170187-SP_1489"/>
<dbReference type="EnsemblBacteria" id="AAK75581">
    <property type="protein sequence ID" value="AAK75581"/>
    <property type="gene ID" value="SP_1489"/>
</dbReference>
<dbReference type="GeneID" id="45653269"/>
<dbReference type="KEGG" id="spn:SP_1489"/>
<dbReference type="eggNOG" id="COG0050">
    <property type="taxonomic scope" value="Bacteria"/>
</dbReference>
<dbReference type="PhylomeDB" id="P64030"/>
<dbReference type="BioCyc" id="SPNE170187:G1FZB-1502-MONOMER"/>
<dbReference type="Proteomes" id="UP000000585">
    <property type="component" value="Chromosome"/>
</dbReference>
<dbReference type="GO" id="GO:0005829">
    <property type="term" value="C:cytosol"/>
    <property type="evidence" value="ECO:0007669"/>
    <property type="project" value="TreeGrafter"/>
</dbReference>
<dbReference type="GO" id="GO:0005525">
    <property type="term" value="F:GTP binding"/>
    <property type="evidence" value="ECO:0007669"/>
    <property type="project" value="UniProtKB-UniRule"/>
</dbReference>
<dbReference type="GO" id="GO:0003924">
    <property type="term" value="F:GTPase activity"/>
    <property type="evidence" value="ECO:0007669"/>
    <property type="project" value="InterPro"/>
</dbReference>
<dbReference type="GO" id="GO:0003746">
    <property type="term" value="F:translation elongation factor activity"/>
    <property type="evidence" value="ECO:0007669"/>
    <property type="project" value="UniProtKB-UniRule"/>
</dbReference>
<dbReference type="CDD" id="cd01884">
    <property type="entry name" value="EF_Tu"/>
    <property type="match status" value="1"/>
</dbReference>
<dbReference type="CDD" id="cd03697">
    <property type="entry name" value="EFTU_II"/>
    <property type="match status" value="1"/>
</dbReference>
<dbReference type="CDD" id="cd03707">
    <property type="entry name" value="EFTU_III"/>
    <property type="match status" value="1"/>
</dbReference>
<dbReference type="FunFam" id="2.40.30.10:FF:000001">
    <property type="entry name" value="Elongation factor Tu"/>
    <property type="match status" value="1"/>
</dbReference>
<dbReference type="FunFam" id="3.40.50.300:FF:000003">
    <property type="entry name" value="Elongation factor Tu"/>
    <property type="match status" value="1"/>
</dbReference>
<dbReference type="Gene3D" id="3.40.50.300">
    <property type="entry name" value="P-loop containing nucleotide triphosphate hydrolases"/>
    <property type="match status" value="1"/>
</dbReference>
<dbReference type="Gene3D" id="2.40.30.10">
    <property type="entry name" value="Translation factors"/>
    <property type="match status" value="2"/>
</dbReference>
<dbReference type="HAMAP" id="MF_00118_B">
    <property type="entry name" value="EF_Tu_B"/>
    <property type="match status" value="1"/>
</dbReference>
<dbReference type="InterPro" id="IPR041709">
    <property type="entry name" value="EF-Tu_GTP-bd"/>
</dbReference>
<dbReference type="InterPro" id="IPR050055">
    <property type="entry name" value="EF-Tu_GTPase"/>
</dbReference>
<dbReference type="InterPro" id="IPR004161">
    <property type="entry name" value="EFTu-like_2"/>
</dbReference>
<dbReference type="InterPro" id="IPR033720">
    <property type="entry name" value="EFTU_2"/>
</dbReference>
<dbReference type="InterPro" id="IPR031157">
    <property type="entry name" value="G_TR_CS"/>
</dbReference>
<dbReference type="InterPro" id="IPR027417">
    <property type="entry name" value="P-loop_NTPase"/>
</dbReference>
<dbReference type="InterPro" id="IPR005225">
    <property type="entry name" value="Small_GTP-bd"/>
</dbReference>
<dbReference type="InterPro" id="IPR000795">
    <property type="entry name" value="T_Tr_GTP-bd_dom"/>
</dbReference>
<dbReference type="InterPro" id="IPR009000">
    <property type="entry name" value="Transl_B-barrel_sf"/>
</dbReference>
<dbReference type="InterPro" id="IPR009001">
    <property type="entry name" value="Transl_elong_EF1A/Init_IF2_C"/>
</dbReference>
<dbReference type="InterPro" id="IPR004541">
    <property type="entry name" value="Transl_elong_EFTu/EF1A_bac/org"/>
</dbReference>
<dbReference type="InterPro" id="IPR004160">
    <property type="entry name" value="Transl_elong_EFTu/EF1A_C"/>
</dbReference>
<dbReference type="NCBIfam" id="TIGR00485">
    <property type="entry name" value="EF-Tu"/>
    <property type="match status" value="1"/>
</dbReference>
<dbReference type="NCBIfam" id="NF000766">
    <property type="entry name" value="PRK00049.1"/>
    <property type="match status" value="1"/>
</dbReference>
<dbReference type="NCBIfam" id="NF009372">
    <property type="entry name" value="PRK12735.1"/>
    <property type="match status" value="1"/>
</dbReference>
<dbReference type="NCBIfam" id="NF009373">
    <property type="entry name" value="PRK12736.1"/>
    <property type="match status" value="1"/>
</dbReference>
<dbReference type="NCBIfam" id="TIGR00231">
    <property type="entry name" value="small_GTP"/>
    <property type="match status" value="1"/>
</dbReference>
<dbReference type="PANTHER" id="PTHR43721:SF22">
    <property type="entry name" value="ELONGATION FACTOR TU, MITOCHONDRIAL"/>
    <property type="match status" value="1"/>
</dbReference>
<dbReference type="PANTHER" id="PTHR43721">
    <property type="entry name" value="ELONGATION FACTOR TU-RELATED"/>
    <property type="match status" value="1"/>
</dbReference>
<dbReference type="Pfam" id="PF00009">
    <property type="entry name" value="GTP_EFTU"/>
    <property type="match status" value="1"/>
</dbReference>
<dbReference type="Pfam" id="PF03144">
    <property type="entry name" value="GTP_EFTU_D2"/>
    <property type="match status" value="1"/>
</dbReference>
<dbReference type="Pfam" id="PF03143">
    <property type="entry name" value="GTP_EFTU_D3"/>
    <property type="match status" value="1"/>
</dbReference>
<dbReference type="PRINTS" id="PR00315">
    <property type="entry name" value="ELONGATNFCT"/>
</dbReference>
<dbReference type="SUPFAM" id="SSF50465">
    <property type="entry name" value="EF-Tu/eEF-1alpha/eIF2-gamma C-terminal domain"/>
    <property type="match status" value="1"/>
</dbReference>
<dbReference type="SUPFAM" id="SSF52540">
    <property type="entry name" value="P-loop containing nucleoside triphosphate hydrolases"/>
    <property type="match status" value="1"/>
</dbReference>
<dbReference type="SUPFAM" id="SSF50447">
    <property type="entry name" value="Translation proteins"/>
    <property type="match status" value="1"/>
</dbReference>
<dbReference type="PROSITE" id="PS00301">
    <property type="entry name" value="G_TR_1"/>
    <property type="match status" value="1"/>
</dbReference>
<dbReference type="PROSITE" id="PS51722">
    <property type="entry name" value="G_TR_2"/>
    <property type="match status" value="1"/>
</dbReference>
<name>EFTU_STRPN</name>
<proteinExistence type="inferred from homology"/>
<feature type="chain" id="PRO_0000091407" description="Elongation factor Tu">
    <location>
        <begin position="1"/>
        <end position="398"/>
    </location>
</feature>
<feature type="domain" description="tr-type G">
    <location>
        <begin position="10"/>
        <end position="207"/>
    </location>
</feature>
<feature type="region of interest" description="G1" evidence="1">
    <location>
        <begin position="19"/>
        <end position="26"/>
    </location>
</feature>
<feature type="region of interest" description="G2" evidence="1">
    <location>
        <begin position="63"/>
        <end position="67"/>
    </location>
</feature>
<feature type="region of interest" description="G3" evidence="1">
    <location>
        <begin position="84"/>
        <end position="87"/>
    </location>
</feature>
<feature type="region of interest" description="G4" evidence="1">
    <location>
        <begin position="139"/>
        <end position="142"/>
    </location>
</feature>
<feature type="region of interest" description="G5" evidence="1">
    <location>
        <begin position="177"/>
        <end position="179"/>
    </location>
</feature>
<feature type="binding site" evidence="2">
    <location>
        <begin position="19"/>
        <end position="26"/>
    </location>
    <ligand>
        <name>GTP</name>
        <dbReference type="ChEBI" id="CHEBI:37565"/>
    </ligand>
</feature>
<feature type="binding site" evidence="2">
    <location>
        <position position="26"/>
    </location>
    <ligand>
        <name>Mg(2+)</name>
        <dbReference type="ChEBI" id="CHEBI:18420"/>
    </ligand>
</feature>
<feature type="binding site" evidence="2">
    <location>
        <begin position="84"/>
        <end position="88"/>
    </location>
    <ligand>
        <name>GTP</name>
        <dbReference type="ChEBI" id="CHEBI:37565"/>
    </ligand>
</feature>
<feature type="binding site" evidence="2">
    <location>
        <begin position="139"/>
        <end position="142"/>
    </location>
    <ligand>
        <name>GTP</name>
        <dbReference type="ChEBI" id="CHEBI:37565"/>
    </ligand>
</feature>
<organism>
    <name type="scientific">Streptococcus pneumoniae serotype 4 (strain ATCC BAA-334 / TIGR4)</name>
    <dbReference type="NCBI Taxonomy" id="170187"/>
    <lineage>
        <taxon>Bacteria</taxon>
        <taxon>Bacillati</taxon>
        <taxon>Bacillota</taxon>
        <taxon>Bacilli</taxon>
        <taxon>Lactobacillales</taxon>
        <taxon>Streptococcaceae</taxon>
        <taxon>Streptococcus</taxon>
    </lineage>
</organism>
<accession>P64030</accession>
<accession>Q97PV3</accession>
<keyword id="KW-0963">Cytoplasm</keyword>
<keyword id="KW-0251">Elongation factor</keyword>
<keyword id="KW-0342">GTP-binding</keyword>
<keyword id="KW-0378">Hydrolase</keyword>
<keyword id="KW-0460">Magnesium</keyword>
<keyword id="KW-0479">Metal-binding</keyword>
<keyword id="KW-0547">Nucleotide-binding</keyword>
<keyword id="KW-0648">Protein biosynthesis</keyword>
<keyword id="KW-1185">Reference proteome</keyword>
<sequence>MAKEKYDRSKPHVNIGTIGHVDHGKTTLTAAITTVLARRLPSSVNQPKDYASIDAAPEERERGITINTAHVEYETEKRHYAHIDAPGHADYVKNMITGAAQMDGAILVVASTDGPMPQTREHILLSRQVGVKHLIVFMNKVDLVDDEELLELVEMEIRDLLSEYDFPGDDLPVIQGSALKALEGDSKYEDIVMELMNTVDEYIPEPERDTDKPLLLPVEDVFSITGRGTVASGRIDRGIVKVNDEIEIVGIKEETQKAVVTGVEMFRKQLDEGLAGDNVGVLLRGVQRDEIERGQVIAKPGSINPHTKFKGEVYILTKEEGGRHTPFFNNYRPQFYFRTTDVTGSIELPAGTEMVMPGDNVTIDVELIHPIAVEQGTTFSIREGGRTVGSGMVTEIEA</sequence>
<reference key="1">
    <citation type="journal article" date="2001" name="Science">
        <title>Complete genome sequence of a virulent isolate of Streptococcus pneumoniae.</title>
        <authorList>
            <person name="Tettelin H."/>
            <person name="Nelson K.E."/>
            <person name="Paulsen I.T."/>
            <person name="Eisen J.A."/>
            <person name="Read T.D."/>
            <person name="Peterson S.N."/>
            <person name="Heidelberg J.F."/>
            <person name="DeBoy R.T."/>
            <person name="Haft D.H."/>
            <person name="Dodson R.J."/>
            <person name="Durkin A.S."/>
            <person name="Gwinn M.L."/>
            <person name="Kolonay J.F."/>
            <person name="Nelson W.C."/>
            <person name="Peterson J.D."/>
            <person name="Umayam L.A."/>
            <person name="White O."/>
            <person name="Salzberg S.L."/>
            <person name="Lewis M.R."/>
            <person name="Radune D."/>
            <person name="Holtzapple E.K."/>
            <person name="Khouri H.M."/>
            <person name="Wolf A.M."/>
            <person name="Utterback T.R."/>
            <person name="Hansen C.L."/>
            <person name="McDonald L.A."/>
            <person name="Feldblyum T.V."/>
            <person name="Angiuoli S.V."/>
            <person name="Dickinson T."/>
            <person name="Hickey E.K."/>
            <person name="Holt I.E."/>
            <person name="Loftus B.J."/>
            <person name="Yang F."/>
            <person name="Smith H.O."/>
            <person name="Venter J.C."/>
            <person name="Dougherty B.A."/>
            <person name="Morrison D.A."/>
            <person name="Hollingshead S.K."/>
            <person name="Fraser C.M."/>
        </authorList>
    </citation>
    <scope>NUCLEOTIDE SEQUENCE [LARGE SCALE GENOMIC DNA]</scope>
    <source>
        <strain>ATCC BAA-334 / TIGR4</strain>
    </source>
</reference>
<gene>
    <name evidence="2" type="primary">tuf</name>
    <name type="synonym">tufA</name>
    <name type="ordered locus">SP_1489</name>
</gene>
<comment type="function">
    <text evidence="2">GTP hydrolase that promotes the GTP-dependent binding of aminoacyl-tRNA to the A-site of ribosomes during protein biosynthesis.</text>
</comment>
<comment type="catalytic activity">
    <reaction evidence="2">
        <text>GTP + H2O = GDP + phosphate + H(+)</text>
        <dbReference type="Rhea" id="RHEA:19669"/>
        <dbReference type="ChEBI" id="CHEBI:15377"/>
        <dbReference type="ChEBI" id="CHEBI:15378"/>
        <dbReference type="ChEBI" id="CHEBI:37565"/>
        <dbReference type="ChEBI" id="CHEBI:43474"/>
        <dbReference type="ChEBI" id="CHEBI:58189"/>
        <dbReference type="EC" id="3.6.5.3"/>
    </reaction>
    <physiologicalReaction direction="left-to-right" evidence="2">
        <dbReference type="Rhea" id="RHEA:19670"/>
    </physiologicalReaction>
</comment>
<comment type="subunit">
    <text evidence="2">Monomer.</text>
</comment>
<comment type="subcellular location">
    <subcellularLocation>
        <location evidence="2">Cytoplasm</location>
    </subcellularLocation>
</comment>
<comment type="similarity">
    <text evidence="2">Belongs to the TRAFAC class translation factor GTPase superfamily. Classic translation factor GTPase family. EF-Tu/EF-1A subfamily.</text>
</comment>